<reference key="1">
    <citation type="journal article" date="1993" name="J. Bacteriol.">
        <title>devRS, an autoregulated and essential genetic locus for fruiting body development in Myxococcus xanthus.</title>
        <authorList>
            <person name="Thoeny-Meyer L."/>
            <person name="Kaiser D."/>
        </authorList>
    </citation>
    <scope>NUCLEOTIDE SEQUENCE [GENOMIC DNA]</scope>
    <scope>INDUCTION</scope>
    <scope>DISRUPTION PHENOTYPE</scope>
    <source>
        <strain>DK1622</strain>
    </source>
</reference>
<reference key="2">
    <citation type="journal article" date="2006" name="Proc. Natl. Acad. Sci. U.S.A.">
        <title>Evolution of sensory complexity recorded in a myxobacterial genome.</title>
        <authorList>
            <person name="Goldman B.S."/>
            <person name="Nierman W.C."/>
            <person name="Kaiser D."/>
            <person name="Slater S.C."/>
            <person name="Durkin A.S."/>
            <person name="Eisen J.A."/>
            <person name="Ronning C.M."/>
            <person name="Barbazuk W.B."/>
            <person name="Blanchard M."/>
            <person name="Field C."/>
            <person name="Halling C."/>
            <person name="Hinkle G."/>
            <person name="Iartchuk O."/>
            <person name="Kim H.S."/>
            <person name="Mackenzie C."/>
            <person name="Madupu R."/>
            <person name="Miller N."/>
            <person name="Shvartsbeyn A."/>
            <person name="Sullivan S.A."/>
            <person name="Vaudin M."/>
            <person name="Wiegand R."/>
            <person name="Kaplan H.B."/>
        </authorList>
    </citation>
    <scope>NUCLEOTIDE SEQUENCE [LARGE SCALE GENOMIC DNA]</scope>
    <source>
        <strain>DK1622</strain>
    </source>
</reference>
<reference key="3">
    <citation type="journal article" date="2007" name="J. Bacteriol.">
        <title>Regulation of dev, an operon that includes genes essential for Myxococcus xanthus development and CRISPR-associated genes and repeats.</title>
        <authorList>
            <person name="Viswanathan P."/>
            <person name="Murphy K."/>
            <person name="Julien B."/>
            <person name="Garza A.G."/>
            <person name="Kroos L."/>
        </authorList>
    </citation>
    <scope>INDUCTION</scope>
    <scope>OPERON STRUCTURE</scope>
    <source>
        <strain>DK1622</strain>
    </source>
</reference>
<evidence type="ECO:0000250" key="1"/>
<evidence type="ECO:0000269" key="2">
    <source>
    </source>
</evidence>
<evidence type="ECO:0000269" key="3">
    <source>
    </source>
</evidence>
<evidence type="ECO:0000305" key="4"/>
<dbReference type="EMBL" id="L19029">
    <property type="protein sequence ID" value="AAA16134.1"/>
    <property type="molecule type" value="Unassigned_DNA"/>
</dbReference>
<dbReference type="EMBL" id="CP000113">
    <property type="protein sequence ID" value="ABF86719.1"/>
    <property type="molecule type" value="Genomic_DNA"/>
</dbReference>
<dbReference type="PIR" id="B49941">
    <property type="entry name" value="B49941"/>
</dbReference>
<dbReference type="RefSeq" id="WP_011557181.1">
    <property type="nucleotide sequence ID" value="NC_008095.1"/>
</dbReference>
<dbReference type="SMR" id="Q07765"/>
<dbReference type="STRING" id="246197.MXAN_7262"/>
<dbReference type="EnsemblBacteria" id="ABF86719">
    <property type="protein sequence ID" value="ABF86719"/>
    <property type="gene ID" value="MXAN_7262"/>
</dbReference>
<dbReference type="GeneID" id="41364428"/>
<dbReference type="KEGG" id="mxa:MXAN_7262"/>
<dbReference type="eggNOG" id="COG1857">
    <property type="taxonomic scope" value="Bacteria"/>
</dbReference>
<dbReference type="HOGENOM" id="CLU_076037_0_0_7"/>
<dbReference type="OrthoDB" id="9781560at2"/>
<dbReference type="Proteomes" id="UP000002402">
    <property type="component" value="Chromosome"/>
</dbReference>
<dbReference type="GO" id="GO:0051607">
    <property type="term" value="P:defense response to virus"/>
    <property type="evidence" value="ECO:0007669"/>
    <property type="project" value="UniProtKB-KW"/>
</dbReference>
<dbReference type="GO" id="GO:0030435">
    <property type="term" value="P:sporulation resulting in formation of a cellular spore"/>
    <property type="evidence" value="ECO:0007669"/>
    <property type="project" value="UniProtKB-KW"/>
</dbReference>
<dbReference type="CDD" id="cd09650">
    <property type="entry name" value="Cas7_I"/>
    <property type="match status" value="1"/>
</dbReference>
<dbReference type="InterPro" id="IPR016581">
    <property type="entry name" value="Cas7/Cst2/DevR_bac"/>
</dbReference>
<dbReference type="InterPro" id="IPR013414">
    <property type="entry name" value="Cas7/Cst2/DevR_sub_I-B/Tneap"/>
</dbReference>
<dbReference type="InterPro" id="IPR010154">
    <property type="entry name" value="CRISPR-assoc_Cas7/Cst2/DevR"/>
</dbReference>
<dbReference type="NCBIfam" id="TIGR02585">
    <property type="entry name" value="cas_Cst2_DevR"/>
    <property type="match status" value="1"/>
</dbReference>
<dbReference type="NCBIfam" id="TIGR01875">
    <property type="entry name" value="cas_MJ0381"/>
    <property type="match status" value="1"/>
</dbReference>
<dbReference type="Pfam" id="PF01905">
    <property type="entry name" value="DevR"/>
    <property type="match status" value="1"/>
</dbReference>
<dbReference type="PIRSF" id="PIRSF011362">
    <property type="entry name" value="Fruiting_body_devlp_DevR"/>
    <property type="match status" value="1"/>
</dbReference>
<sequence>MSLHVFAAFVTPLGTAANNRGLTEGNITSLQKLVWNGQVHTTVSAESIRFALRRRLNEQEPCNRTYDDASRANAWKDAAFSAWSGKSKEKTYIDDDLLGFMSAEGAKQEKEKGTAKVRRAVLEVSRAVSLTPWSGDVTFNAASPGATPSAQKKGSNPVPYGTEMHATRYQYGVALTPEALRVPARAVTALNQLCALGPVAGNHGRFLFDFSPESVVFRLTQEAAPRILYAFEPSSRAGGVELAALLRKVKSGDVPAKELVLGGQVVEGLGAEEREVLSGAELHTGVVAACRAACKRLEVRKK</sequence>
<feature type="chain" id="PRO_0000079871" description="CRISPR-associated protein Cas7/Cst2/DevR">
    <location>
        <begin position="1"/>
        <end position="302"/>
    </location>
</feature>
<accession>Q07765</accession>
<accession>Q1CW48</accession>
<organism>
    <name type="scientific">Myxococcus xanthus (strain DK1622)</name>
    <dbReference type="NCBI Taxonomy" id="246197"/>
    <lineage>
        <taxon>Bacteria</taxon>
        <taxon>Pseudomonadati</taxon>
        <taxon>Myxococcota</taxon>
        <taxon>Myxococcia</taxon>
        <taxon>Myxococcales</taxon>
        <taxon>Cystobacterineae</taxon>
        <taxon>Myxococcaceae</taxon>
        <taxon>Myxococcus</taxon>
    </lineage>
</organism>
<proteinExistence type="evidence at transcript level"/>
<comment type="function">
    <text evidence="1">CRISPR (clustered regularly interspaced short palindromic repeat) is an adaptive immune system that provides protection against mobile genetic elements (viruses, transposable elements and conjugative plasmids). CRISPR clusters contain spacers, sequences complementary to antecedent mobile elements, and target invading nucleic acids. CRISPR clusters are transcribed and processed into CRISPR RNA (crRNA) (By similarity).</text>
</comment>
<comment type="function">
    <text>Has a role in fruiting body development, sporulation and aggregation.</text>
</comment>
<comment type="developmental stage">
    <text>Operon expression begins by 6 hours after starvation has initiated development and is under strong negative autoregulation.</text>
</comment>
<comment type="induction">
    <text evidence="2 3">Part of an operon going from at least MXAN_7266 to MXAN_7259 that includes a CRISPR operon with transcription continuing into the pre-crRNA locus.</text>
</comment>
<comment type="disruption phenotype">
    <text evidence="3">Essential for sporulation, decreases sporulation 100 to 1000-fold, aggregation is defective.</text>
</comment>
<comment type="similarity">
    <text evidence="4">Belongs to the CRISPR-associated protein Cas7/Cst2/DevR family. Subtype I-B/Tneap subfamily.</text>
</comment>
<name>DEVR_MYXXD</name>
<protein>
    <recommendedName>
        <fullName>CRISPR-associated protein Cas7/Cst2/DevR</fullName>
    </recommendedName>
    <alternativeName>
        <fullName>CRISPR-associated protein Cas7/Cst2/DevR, subtype I-B/Tneap</fullName>
    </alternativeName>
    <alternativeName>
        <fullName>Fruiting body developmental protein R</fullName>
    </alternativeName>
</protein>
<keyword id="KW-0051">Antiviral defense</keyword>
<keyword id="KW-0293">Fruiting body</keyword>
<keyword id="KW-1185">Reference proteome</keyword>
<keyword id="KW-0749">Sporulation</keyword>
<gene>
    <name type="primary">devR</name>
    <name type="synonym">cas7</name>
    <name type="ordered locus">MXAN_7262</name>
</gene>